<accession>Q2QS71</accession>
<accession>B7E394</accession>
<accession>Q0INK8</accession>
<name>H2A7_ORYSJ</name>
<dbReference type="EMBL" id="DP000011">
    <property type="protein sequence ID" value="ABA98009.1"/>
    <property type="molecule type" value="Genomic_DNA"/>
</dbReference>
<dbReference type="EMBL" id="AP008218">
    <property type="protein sequence ID" value="BAF29707.1"/>
    <property type="molecule type" value="Genomic_DNA"/>
</dbReference>
<dbReference type="EMBL" id="AP014968">
    <property type="protein sequence ID" value="BAT16968.1"/>
    <property type="molecule type" value="Genomic_DNA"/>
</dbReference>
<dbReference type="EMBL" id="AK058913">
    <property type="protein sequence ID" value="BAG86841.1"/>
    <property type="molecule type" value="mRNA"/>
</dbReference>
<dbReference type="EMBL" id="AK071511">
    <property type="protein sequence ID" value="BAG92530.1"/>
    <property type="molecule type" value="mRNA"/>
</dbReference>
<dbReference type="RefSeq" id="XP_015620672.1">
    <property type="nucleotide sequence ID" value="XM_015765186.1"/>
</dbReference>
<dbReference type="SMR" id="Q2QS71"/>
<dbReference type="FunCoup" id="Q2QS71">
    <property type="interactions" value="1545"/>
</dbReference>
<dbReference type="STRING" id="39947.Q2QS71"/>
<dbReference type="PaxDb" id="39947-Q2QS71"/>
<dbReference type="EnsemblPlants" id="Os12t0438000-02">
    <property type="protein sequence ID" value="Os12t0438000-02"/>
    <property type="gene ID" value="Os12g0438000"/>
</dbReference>
<dbReference type="Gramene" id="Os12t0438000-02">
    <property type="protein sequence ID" value="Os12t0438000-02"/>
    <property type="gene ID" value="Os12g0438000"/>
</dbReference>
<dbReference type="KEGG" id="dosa:Os12g0438000"/>
<dbReference type="eggNOG" id="KOG1756">
    <property type="taxonomic scope" value="Eukaryota"/>
</dbReference>
<dbReference type="HOGENOM" id="CLU_062828_3_0_1"/>
<dbReference type="InParanoid" id="Q2QS71"/>
<dbReference type="OMA" id="HSMIANQ"/>
<dbReference type="OrthoDB" id="9421954at2759"/>
<dbReference type="Proteomes" id="UP000000763">
    <property type="component" value="Chromosome 12"/>
</dbReference>
<dbReference type="Proteomes" id="UP000059680">
    <property type="component" value="Chromosome 12"/>
</dbReference>
<dbReference type="GO" id="GO:0000786">
    <property type="term" value="C:nucleosome"/>
    <property type="evidence" value="ECO:0000318"/>
    <property type="project" value="GO_Central"/>
</dbReference>
<dbReference type="GO" id="GO:0005634">
    <property type="term" value="C:nucleus"/>
    <property type="evidence" value="ECO:0000318"/>
    <property type="project" value="GO_Central"/>
</dbReference>
<dbReference type="GO" id="GO:0003677">
    <property type="term" value="F:DNA binding"/>
    <property type="evidence" value="ECO:0007669"/>
    <property type="project" value="UniProtKB-KW"/>
</dbReference>
<dbReference type="GO" id="GO:0046982">
    <property type="term" value="F:protein heterodimerization activity"/>
    <property type="evidence" value="ECO:0007669"/>
    <property type="project" value="InterPro"/>
</dbReference>
<dbReference type="GO" id="GO:0030527">
    <property type="term" value="F:structural constituent of chromatin"/>
    <property type="evidence" value="ECO:0000318"/>
    <property type="project" value="GO_Central"/>
</dbReference>
<dbReference type="GO" id="GO:0031507">
    <property type="term" value="P:heterochromatin formation"/>
    <property type="evidence" value="ECO:0000318"/>
    <property type="project" value="GO_Central"/>
</dbReference>
<dbReference type="CDD" id="cd00074">
    <property type="entry name" value="HFD_H2A"/>
    <property type="match status" value="1"/>
</dbReference>
<dbReference type="FunFam" id="1.10.20.10:FF:000009">
    <property type="entry name" value="Histone H2A"/>
    <property type="match status" value="1"/>
</dbReference>
<dbReference type="Gene3D" id="1.10.20.10">
    <property type="entry name" value="Histone, subunit A"/>
    <property type="match status" value="1"/>
</dbReference>
<dbReference type="InterPro" id="IPR009072">
    <property type="entry name" value="Histone-fold"/>
</dbReference>
<dbReference type="InterPro" id="IPR002119">
    <property type="entry name" value="Histone_H2A"/>
</dbReference>
<dbReference type="InterPro" id="IPR007125">
    <property type="entry name" value="Histone_H2A/H2B/H3"/>
</dbReference>
<dbReference type="InterPro" id="IPR032454">
    <property type="entry name" value="Histone_H2A_C"/>
</dbReference>
<dbReference type="InterPro" id="IPR032458">
    <property type="entry name" value="Histone_H2A_CS"/>
</dbReference>
<dbReference type="PANTHER" id="PTHR23430">
    <property type="entry name" value="HISTONE H2A"/>
    <property type="match status" value="1"/>
</dbReference>
<dbReference type="Pfam" id="PF00125">
    <property type="entry name" value="Histone"/>
    <property type="match status" value="1"/>
</dbReference>
<dbReference type="Pfam" id="PF16211">
    <property type="entry name" value="Histone_H2A_C"/>
    <property type="match status" value="1"/>
</dbReference>
<dbReference type="PRINTS" id="PR00620">
    <property type="entry name" value="HISTONEH2A"/>
</dbReference>
<dbReference type="SMART" id="SM00414">
    <property type="entry name" value="H2A"/>
    <property type="match status" value="1"/>
</dbReference>
<dbReference type="SUPFAM" id="SSF47113">
    <property type="entry name" value="Histone-fold"/>
    <property type="match status" value="1"/>
</dbReference>
<dbReference type="PROSITE" id="PS00046">
    <property type="entry name" value="HISTONE_H2A"/>
    <property type="match status" value="1"/>
</dbReference>
<feature type="chain" id="PRO_0000239998" description="Probable histone H2A.7">
    <location>
        <begin position="1"/>
        <end position="135"/>
    </location>
</feature>
<sequence length="135" mass="14052">MAGRGKAIGAGAAKKATSRSSKAGLQFPVGRIARFLKAGKYAERVGAGAPVYLAAVLEYLAAEVLELAGNAARDNKKTRIVPRHIQLAVRNDEELTKLLGGATIASGGVMPNIHQHLLPKKAGSSKASHADDDDN</sequence>
<gene>
    <name type="ordered locus">Os12g0438000</name>
    <name type="ordered locus">LOC_Os12g25120</name>
</gene>
<keyword id="KW-0158">Chromosome</keyword>
<keyword id="KW-0238">DNA-binding</keyword>
<keyword id="KW-0544">Nucleosome core</keyword>
<keyword id="KW-0539">Nucleus</keyword>
<keyword id="KW-1185">Reference proteome</keyword>
<proteinExistence type="evidence at transcript level"/>
<evidence type="ECO:0000250" key="1"/>
<evidence type="ECO:0000305" key="2"/>
<reference key="1">
    <citation type="journal article" date="2005" name="BMC Biol.">
        <title>The sequence of rice chromosomes 11 and 12, rich in disease resistance genes and recent gene duplications.</title>
        <authorList>
            <consortium name="The rice chromosomes 11 and 12 sequencing consortia"/>
        </authorList>
    </citation>
    <scope>NUCLEOTIDE SEQUENCE [LARGE SCALE GENOMIC DNA]</scope>
    <source>
        <strain>cv. Nipponbare</strain>
    </source>
</reference>
<reference key="2">
    <citation type="journal article" date="2005" name="Nature">
        <title>The map-based sequence of the rice genome.</title>
        <authorList>
            <consortium name="International rice genome sequencing project (IRGSP)"/>
        </authorList>
    </citation>
    <scope>NUCLEOTIDE SEQUENCE [LARGE SCALE GENOMIC DNA]</scope>
    <source>
        <strain>cv. Nipponbare</strain>
    </source>
</reference>
<reference key="3">
    <citation type="journal article" date="2008" name="Nucleic Acids Res.">
        <title>The rice annotation project database (RAP-DB): 2008 update.</title>
        <authorList>
            <consortium name="The rice annotation project (RAP)"/>
        </authorList>
    </citation>
    <scope>GENOME REANNOTATION</scope>
    <source>
        <strain>cv. Nipponbare</strain>
    </source>
</reference>
<reference key="4">
    <citation type="journal article" date="2013" name="Rice">
        <title>Improvement of the Oryza sativa Nipponbare reference genome using next generation sequence and optical map data.</title>
        <authorList>
            <person name="Kawahara Y."/>
            <person name="de la Bastide M."/>
            <person name="Hamilton J.P."/>
            <person name="Kanamori H."/>
            <person name="McCombie W.R."/>
            <person name="Ouyang S."/>
            <person name="Schwartz D.C."/>
            <person name="Tanaka T."/>
            <person name="Wu J."/>
            <person name="Zhou S."/>
            <person name="Childs K.L."/>
            <person name="Davidson R.M."/>
            <person name="Lin H."/>
            <person name="Quesada-Ocampo L."/>
            <person name="Vaillancourt B."/>
            <person name="Sakai H."/>
            <person name="Lee S.S."/>
            <person name="Kim J."/>
            <person name="Numa H."/>
            <person name="Itoh T."/>
            <person name="Buell C.R."/>
            <person name="Matsumoto T."/>
        </authorList>
    </citation>
    <scope>GENOME REANNOTATION</scope>
    <source>
        <strain>cv. Nipponbare</strain>
    </source>
</reference>
<reference key="5">
    <citation type="journal article" date="2003" name="Science">
        <title>Collection, mapping, and annotation of over 28,000 cDNA clones from japonica rice.</title>
        <authorList>
            <consortium name="The rice full-length cDNA consortium"/>
        </authorList>
    </citation>
    <scope>NUCLEOTIDE SEQUENCE [LARGE SCALE MRNA]</scope>
    <source>
        <strain>cv. Nipponbare</strain>
    </source>
</reference>
<protein>
    <recommendedName>
        <fullName>Probable histone H2A.7</fullName>
    </recommendedName>
</protein>
<comment type="function">
    <text>Core component of nucleosome. Nucleosomes wrap and compact DNA into chromatin, limiting DNA accessibility to the cellular machineries which require DNA as a template. Histones thereby play a central role in transcription regulation, DNA repair, DNA replication and chromosomal stability. DNA accessibility is regulated via a complex set of post-translational modifications of histones, also called histone code, and nucleosome remodeling.</text>
</comment>
<comment type="subunit">
    <text>The nucleosome is a histone octamer containing two molecules each of H2A, H2B, H3 and H4 assembled in one H3-H4 heterotetramer and two H2A-H2B heterodimers. The octamer wraps approximately 147 bp of DNA.</text>
</comment>
<comment type="subcellular location">
    <subcellularLocation>
        <location evidence="1">Nucleus</location>
    </subcellularLocation>
    <subcellularLocation>
        <location evidence="1">Chromosome</location>
    </subcellularLocation>
</comment>
<comment type="similarity">
    <text evidence="2">Belongs to the histone H2A family.</text>
</comment>
<organism>
    <name type="scientific">Oryza sativa subsp. japonica</name>
    <name type="common">Rice</name>
    <dbReference type="NCBI Taxonomy" id="39947"/>
    <lineage>
        <taxon>Eukaryota</taxon>
        <taxon>Viridiplantae</taxon>
        <taxon>Streptophyta</taxon>
        <taxon>Embryophyta</taxon>
        <taxon>Tracheophyta</taxon>
        <taxon>Spermatophyta</taxon>
        <taxon>Magnoliopsida</taxon>
        <taxon>Liliopsida</taxon>
        <taxon>Poales</taxon>
        <taxon>Poaceae</taxon>
        <taxon>BOP clade</taxon>
        <taxon>Oryzoideae</taxon>
        <taxon>Oryzeae</taxon>
        <taxon>Oryzinae</taxon>
        <taxon>Oryza</taxon>
        <taxon>Oryza sativa</taxon>
    </lineage>
</organism>